<comment type="function">
    <text evidence="1">Component of the acetyl coenzyme A carboxylase (ACC) complex. First, biotin carboxylase catalyzes the carboxylation of biotin on its carrier protein (BCCP) and then the CO(2) group is transferred by the carboxyltransferase to acetyl-CoA to form malonyl-CoA.</text>
</comment>
<comment type="catalytic activity">
    <reaction evidence="1">
        <text>N(6)-carboxybiotinyl-L-lysyl-[protein] + acetyl-CoA = N(6)-biotinyl-L-lysyl-[protein] + malonyl-CoA</text>
        <dbReference type="Rhea" id="RHEA:54728"/>
        <dbReference type="Rhea" id="RHEA-COMP:10505"/>
        <dbReference type="Rhea" id="RHEA-COMP:10506"/>
        <dbReference type="ChEBI" id="CHEBI:57288"/>
        <dbReference type="ChEBI" id="CHEBI:57384"/>
        <dbReference type="ChEBI" id="CHEBI:83144"/>
        <dbReference type="ChEBI" id="CHEBI:83145"/>
        <dbReference type="EC" id="2.1.3.15"/>
    </reaction>
</comment>
<comment type="pathway">
    <text evidence="1">Lipid metabolism; malonyl-CoA biosynthesis; malonyl-CoA from acetyl-CoA: step 1/1.</text>
</comment>
<comment type="subunit">
    <text evidence="1">Acetyl-CoA carboxylase is a heterohexamer composed of biotin carboxyl carrier protein (AccB), biotin carboxylase (AccC) and two subunits each of ACCase subunit alpha (AccA) and ACCase subunit beta (AccD).</text>
</comment>
<comment type="subcellular location">
    <subcellularLocation>
        <location evidence="1">Cytoplasm</location>
    </subcellularLocation>
</comment>
<comment type="similarity">
    <text evidence="1">Belongs to the AccA family.</text>
</comment>
<reference key="1">
    <citation type="journal article" date="2008" name="Proc. Natl. Acad. Sci. U.S.A.">
        <title>The genome of Cyanothece 51142, a unicellular diazotrophic cyanobacterium important in the marine nitrogen cycle.</title>
        <authorList>
            <person name="Welsh E.A."/>
            <person name="Liberton M."/>
            <person name="Stoeckel J."/>
            <person name="Loh T."/>
            <person name="Elvitigala T."/>
            <person name="Wang C."/>
            <person name="Wollam A."/>
            <person name="Fulton R.S."/>
            <person name="Clifton S.W."/>
            <person name="Jacobs J.M."/>
            <person name="Aurora R."/>
            <person name="Ghosh B.K."/>
            <person name="Sherman L.A."/>
            <person name="Smith R.D."/>
            <person name="Wilson R.K."/>
            <person name="Pakrasi H.B."/>
        </authorList>
    </citation>
    <scope>NUCLEOTIDE SEQUENCE [LARGE SCALE GENOMIC DNA]</scope>
    <source>
        <strain>ATCC 51142 / BH68</strain>
    </source>
</reference>
<proteinExistence type="inferred from homology"/>
<feature type="chain" id="PRO_1000148737" description="Acetyl-coenzyme A carboxylase carboxyl transferase subunit alpha">
    <location>
        <begin position="1"/>
        <end position="332"/>
    </location>
</feature>
<feature type="domain" description="CoA carboxyltransferase C-terminal" evidence="2">
    <location>
        <begin position="44"/>
        <end position="298"/>
    </location>
</feature>
<gene>
    <name evidence="1" type="primary">accA</name>
    <name type="ordered locus">cce_3933</name>
</gene>
<accession>B1WPW6</accession>
<protein>
    <recommendedName>
        <fullName evidence="1">Acetyl-coenzyme A carboxylase carboxyl transferase subunit alpha</fullName>
        <shortName evidence="1">ACCase subunit alpha</shortName>
        <shortName evidence="1">Acetyl-CoA carboxylase carboxyltransferase subunit alpha</shortName>
        <ecNumber evidence="1">2.1.3.15</ecNumber>
    </recommendedName>
</protein>
<name>ACCA_CROS5</name>
<evidence type="ECO:0000255" key="1">
    <source>
        <dbReference type="HAMAP-Rule" id="MF_00823"/>
    </source>
</evidence>
<evidence type="ECO:0000255" key="2">
    <source>
        <dbReference type="PROSITE-ProRule" id="PRU01137"/>
    </source>
</evidence>
<dbReference type="EC" id="2.1.3.15" evidence="1"/>
<dbReference type="EMBL" id="CP000806">
    <property type="protein sequence ID" value="ACB53281.1"/>
    <property type="molecule type" value="Genomic_DNA"/>
</dbReference>
<dbReference type="RefSeq" id="WP_009547235.1">
    <property type="nucleotide sequence ID" value="NC_010546.1"/>
</dbReference>
<dbReference type="SMR" id="B1WPW6"/>
<dbReference type="STRING" id="43989.cce_3933"/>
<dbReference type="KEGG" id="cyt:cce_3933"/>
<dbReference type="eggNOG" id="COG0825">
    <property type="taxonomic scope" value="Bacteria"/>
</dbReference>
<dbReference type="HOGENOM" id="CLU_015486_0_2_3"/>
<dbReference type="OrthoDB" id="9808023at2"/>
<dbReference type="UniPathway" id="UPA00655">
    <property type="reaction ID" value="UER00711"/>
</dbReference>
<dbReference type="Proteomes" id="UP000001203">
    <property type="component" value="Chromosome circular"/>
</dbReference>
<dbReference type="GO" id="GO:0009317">
    <property type="term" value="C:acetyl-CoA carboxylase complex"/>
    <property type="evidence" value="ECO:0007669"/>
    <property type="project" value="InterPro"/>
</dbReference>
<dbReference type="GO" id="GO:0003989">
    <property type="term" value="F:acetyl-CoA carboxylase activity"/>
    <property type="evidence" value="ECO:0007669"/>
    <property type="project" value="InterPro"/>
</dbReference>
<dbReference type="GO" id="GO:0005524">
    <property type="term" value="F:ATP binding"/>
    <property type="evidence" value="ECO:0007669"/>
    <property type="project" value="UniProtKB-KW"/>
</dbReference>
<dbReference type="GO" id="GO:0016743">
    <property type="term" value="F:carboxyl- or carbamoyltransferase activity"/>
    <property type="evidence" value="ECO:0007669"/>
    <property type="project" value="UniProtKB-UniRule"/>
</dbReference>
<dbReference type="GO" id="GO:0006633">
    <property type="term" value="P:fatty acid biosynthetic process"/>
    <property type="evidence" value="ECO:0007669"/>
    <property type="project" value="UniProtKB-KW"/>
</dbReference>
<dbReference type="GO" id="GO:2001295">
    <property type="term" value="P:malonyl-CoA biosynthetic process"/>
    <property type="evidence" value="ECO:0007669"/>
    <property type="project" value="UniProtKB-UniRule"/>
</dbReference>
<dbReference type="Gene3D" id="3.90.226.10">
    <property type="entry name" value="2-enoyl-CoA Hydratase, Chain A, domain 1"/>
    <property type="match status" value="1"/>
</dbReference>
<dbReference type="HAMAP" id="MF_00823">
    <property type="entry name" value="AcetylCoA_CT_alpha"/>
    <property type="match status" value="1"/>
</dbReference>
<dbReference type="InterPro" id="IPR001095">
    <property type="entry name" value="Acetyl_CoA_COase_a_su"/>
</dbReference>
<dbReference type="InterPro" id="IPR029045">
    <property type="entry name" value="ClpP/crotonase-like_dom_sf"/>
</dbReference>
<dbReference type="InterPro" id="IPR011763">
    <property type="entry name" value="COA_CT_C"/>
</dbReference>
<dbReference type="NCBIfam" id="TIGR00513">
    <property type="entry name" value="accA"/>
    <property type="match status" value="1"/>
</dbReference>
<dbReference type="NCBIfam" id="NF041504">
    <property type="entry name" value="AccA_sub"/>
    <property type="match status" value="1"/>
</dbReference>
<dbReference type="NCBIfam" id="NF004344">
    <property type="entry name" value="PRK05724.1"/>
    <property type="match status" value="1"/>
</dbReference>
<dbReference type="PANTHER" id="PTHR42853">
    <property type="entry name" value="ACETYL-COENZYME A CARBOXYLASE CARBOXYL TRANSFERASE SUBUNIT ALPHA"/>
    <property type="match status" value="1"/>
</dbReference>
<dbReference type="PANTHER" id="PTHR42853:SF3">
    <property type="entry name" value="ACETYL-COENZYME A CARBOXYLASE CARBOXYL TRANSFERASE SUBUNIT ALPHA, CHLOROPLASTIC"/>
    <property type="match status" value="1"/>
</dbReference>
<dbReference type="Pfam" id="PF03255">
    <property type="entry name" value="ACCA"/>
    <property type="match status" value="1"/>
</dbReference>
<dbReference type="PRINTS" id="PR01069">
    <property type="entry name" value="ACCCTRFRASEA"/>
</dbReference>
<dbReference type="SUPFAM" id="SSF52096">
    <property type="entry name" value="ClpP/crotonase"/>
    <property type="match status" value="1"/>
</dbReference>
<dbReference type="PROSITE" id="PS50989">
    <property type="entry name" value="COA_CT_CTER"/>
    <property type="match status" value="1"/>
</dbReference>
<keyword id="KW-0067">ATP-binding</keyword>
<keyword id="KW-0963">Cytoplasm</keyword>
<keyword id="KW-0275">Fatty acid biosynthesis</keyword>
<keyword id="KW-0276">Fatty acid metabolism</keyword>
<keyword id="KW-0444">Lipid biosynthesis</keyword>
<keyword id="KW-0443">Lipid metabolism</keyword>
<keyword id="KW-0547">Nucleotide-binding</keyword>
<keyword id="KW-1185">Reference proteome</keyword>
<keyword id="KW-0808">Transferase</keyword>
<organism>
    <name type="scientific">Crocosphaera subtropica (strain ATCC 51142 / BH68)</name>
    <name type="common">Cyanothece sp. (strain ATCC 51142)</name>
    <dbReference type="NCBI Taxonomy" id="43989"/>
    <lineage>
        <taxon>Bacteria</taxon>
        <taxon>Bacillati</taxon>
        <taxon>Cyanobacteriota</taxon>
        <taxon>Cyanophyceae</taxon>
        <taxon>Oscillatoriophycideae</taxon>
        <taxon>Chroococcales</taxon>
        <taxon>Aphanothecaceae</taxon>
        <taxon>Crocosphaera</taxon>
        <taxon>Crocosphaera subtropica</taxon>
    </lineage>
</organism>
<sequence>MSKNERRTFLLDFEKPLWELEARIEQIRHLAEENNVDVSEQIAQLESRAQNLRQEIFSSLTPSQRLQLARHPRRPSTLDYIQSIADEWFELHGDRGGYDDPALVGGVARLGGRPVVILGHQKGRDTKDNVARNFGMPAPGGYRKAIRLMEHANQFSMPILTFIDTPGAWAGVDAEKLGQGEAIAFNLRQMFSFDVPIICTVIGEGGSGGALGIGVGDKLMMLEHAVYTVATPEACAAILWKDAKKSSQAAVALKITAKDLKELGIIDTIIPEPSGAAHVNPLEAAAILKETLVNNLEELSNLTPEERKTLRYEKFRQIGVFLESDSNLALHS</sequence>